<reference key="1">
    <citation type="journal article" date="2006" name="Proc. Natl. Acad. Sci. U.S.A.">
        <title>Burkholderia xenovorans LB400 harbors a multi-replicon, 9.73-Mbp genome shaped for versatility.</title>
        <authorList>
            <person name="Chain P.S.G."/>
            <person name="Denef V.J."/>
            <person name="Konstantinidis K.T."/>
            <person name="Vergez L.M."/>
            <person name="Agullo L."/>
            <person name="Reyes V.L."/>
            <person name="Hauser L."/>
            <person name="Cordova M."/>
            <person name="Gomez L."/>
            <person name="Gonzalez M."/>
            <person name="Land M."/>
            <person name="Lao V."/>
            <person name="Larimer F."/>
            <person name="LiPuma J.J."/>
            <person name="Mahenthiralingam E."/>
            <person name="Malfatti S.A."/>
            <person name="Marx C.J."/>
            <person name="Parnell J.J."/>
            <person name="Ramette A."/>
            <person name="Richardson P."/>
            <person name="Seeger M."/>
            <person name="Smith D."/>
            <person name="Spilker T."/>
            <person name="Sul W.J."/>
            <person name="Tsoi T.V."/>
            <person name="Ulrich L.E."/>
            <person name="Zhulin I.B."/>
            <person name="Tiedje J.M."/>
        </authorList>
    </citation>
    <scope>NUCLEOTIDE SEQUENCE [LARGE SCALE GENOMIC DNA]</scope>
    <source>
        <strain>LB400</strain>
    </source>
</reference>
<organism>
    <name type="scientific">Paraburkholderia xenovorans (strain LB400)</name>
    <dbReference type="NCBI Taxonomy" id="266265"/>
    <lineage>
        <taxon>Bacteria</taxon>
        <taxon>Pseudomonadati</taxon>
        <taxon>Pseudomonadota</taxon>
        <taxon>Betaproteobacteria</taxon>
        <taxon>Burkholderiales</taxon>
        <taxon>Burkholderiaceae</taxon>
        <taxon>Paraburkholderia</taxon>
    </lineage>
</organism>
<name>MRAY_PARXL</name>
<keyword id="KW-0131">Cell cycle</keyword>
<keyword id="KW-0132">Cell division</keyword>
<keyword id="KW-0997">Cell inner membrane</keyword>
<keyword id="KW-1003">Cell membrane</keyword>
<keyword id="KW-0133">Cell shape</keyword>
<keyword id="KW-0961">Cell wall biogenesis/degradation</keyword>
<keyword id="KW-0460">Magnesium</keyword>
<keyword id="KW-0472">Membrane</keyword>
<keyword id="KW-0479">Metal-binding</keyword>
<keyword id="KW-0573">Peptidoglycan synthesis</keyword>
<keyword id="KW-1185">Reference proteome</keyword>
<keyword id="KW-0808">Transferase</keyword>
<keyword id="KW-0812">Transmembrane</keyword>
<keyword id="KW-1133">Transmembrane helix</keyword>
<dbReference type="EC" id="2.7.8.13" evidence="1"/>
<dbReference type="EMBL" id="CP000270">
    <property type="protein sequence ID" value="ABE32450.1"/>
    <property type="molecule type" value="Genomic_DNA"/>
</dbReference>
<dbReference type="RefSeq" id="WP_007180303.1">
    <property type="nucleotide sequence ID" value="NZ_CP008760.1"/>
</dbReference>
<dbReference type="SMR" id="Q13TY9"/>
<dbReference type="STRING" id="266265.Bxe_A0483"/>
<dbReference type="KEGG" id="bxb:DR64_2659"/>
<dbReference type="KEGG" id="bxe:Bxe_A0483"/>
<dbReference type="eggNOG" id="COG0472">
    <property type="taxonomic scope" value="Bacteria"/>
</dbReference>
<dbReference type="OrthoDB" id="9805475at2"/>
<dbReference type="UniPathway" id="UPA00219"/>
<dbReference type="Proteomes" id="UP000001817">
    <property type="component" value="Chromosome 1"/>
</dbReference>
<dbReference type="GO" id="GO:0005886">
    <property type="term" value="C:plasma membrane"/>
    <property type="evidence" value="ECO:0007669"/>
    <property type="project" value="UniProtKB-SubCell"/>
</dbReference>
<dbReference type="GO" id="GO:0046872">
    <property type="term" value="F:metal ion binding"/>
    <property type="evidence" value="ECO:0007669"/>
    <property type="project" value="UniProtKB-KW"/>
</dbReference>
<dbReference type="GO" id="GO:0008963">
    <property type="term" value="F:phospho-N-acetylmuramoyl-pentapeptide-transferase activity"/>
    <property type="evidence" value="ECO:0007669"/>
    <property type="project" value="UniProtKB-UniRule"/>
</dbReference>
<dbReference type="GO" id="GO:0051992">
    <property type="term" value="F:UDP-N-acetylmuramoyl-L-alanyl-D-glutamyl-meso-2,6-diaminopimelyl-D-alanyl-D-alanine:undecaprenyl-phosphate transferase activity"/>
    <property type="evidence" value="ECO:0007669"/>
    <property type="project" value="RHEA"/>
</dbReference>
<dbReference type="GO" id="GO:0051301">
    <property type="term" value="P:cell division"/>
    <property type="evidence" value="ECO:0007669"/>
    <property type="project" value="UniProtKB-KW"/>
</dbReference>
<dbReference type="GO" id="GO:0071555">
    <property type="term" value="P:cell wall organization"/>
    <property type="evidence" value="ECO:0007669"/>
    <property type="project" value="UniProtKB-KW"/>
</dbReference>
<dbReference type="GO" id="GO:0009252">
    <property type="term" value="P:peptidoglycan biosynthetic process"/>
    <property type="evidence" value="ECO:0007669"/>
    <property type="project" value="UniProtKB-UniRule"/>
</dbReference>
<dbReference type="GO" id="GO:0008360">
    <property type="term" value="P:regulation of cell shape"/>
    <property type="evidence" value="ECO:0007669"/>
    <property type="project" value="UniProtKB-KW"/>
</dbReference>
<dbReference type="CDD" id="cd06852">
    <property type="entry name" value="GT_MraY"/>
    <property type="match status" value="1"/>
</dbReference>
<dbReference type="HAMAP" id="MF_00038">
    <property type="entry name" value="MraY"/>
    <property type="match status" value="1"/>
</dbReference>
<dbReference type="InterPro" id="IPR000715">
    <property type="entry name" value="Glycosyl_transferase_4"/>
</dbReference>
<dbReference type="InterPro" id="IPR003524">
    <property type="entry name" value="PNAcMuramoyl-5peptid_Trfase"/>
</dbReference>
<dbReference type="InterPro" id="IPR018480">
    <property type="entry name" value="PNAcMuramoyl-5peptid_Trfase_CS"/>
</dbReference>
<dbReference type="NCBIfam" id="TIGR00445">
    <property type="entry name" value="mraY"/>
    <property type="match status" value="1"/>
</dbReference>
<dbReference type="PANTHER" id="PTHR22926">
    <property type="entry name" value="PHOSPHO-N-ACETYLMURAMOYL-PENTAPEPTIDE-TRANSFERASE"/>
    <property type="match status" value="1"/>
</dbReference>
<dbReference type="PANTHER" id="PTHR22926:SF5">
    <property type="entry name" value="PHOSPHO-N-ACETYLMURAMOYL-PENTAPEPTIDE-TRANSFERASE HOMOLOG"/>
    <property type="match status" value="1"/>
</dbReference>
<dbReference type="Pfam" id="PF00953">
    <property type="entry name" value="Glycos_transf_4"/>
    <property type="match status" value="1"/>
</dbReference>
<dbReference type="Pfam" id="PF10555">
    <property type="entry name" value="MraY_sig1"/>
    <property type="match status" value="1"/>
</dbReference>
<dbReference type="PROSITE" id="PS01347">
    <property type="entry name" value="MRAY_1"/>
    <property type="match status" value="1"/>
</dbReference>
<dbReference type="PROSITE" id="PS01348">
    <property type="entry name" value="MRAY_2"/>
    <property type="match status" value="1"/>
</dbReference>
<feature type="chain" id="PRO_1000002953" description="Phospho-N-acetylmuramoyl-pentapeptide-transferase">
    <location>
        <begin position="1"/>
        <end position="389"/>
    </location>
</feature>
<feature type="transmembrane region" description="Helical" evidence="1">
    <location>
        <begin position="25"/>
        <end position="45"/>
    </location>
</feature>
<feature type="transmembrane region" description="Helical" evidence="1">
    <location>
        <begin position="73"/>
        <end position="93"/>
    </location>
</feature>
<feature type="transmembrane region" description="Helical" evidence="1">
    <location>
        <begin position="97"/>
        <end position="117"/>
    </location>
</feature>
<feature type="transmembrane region" description="Helical" evidence="1">
    <location>
        <begin position="135"/>
        <end position="155"/>
    </location>
</feature>
<feature type="transmembrane region" description="Helical" evidence="1">
    <location>
        <begin position="190"/>
        <end position="210"/>
    </location>
</feature>
<feature type="transmembrane region" description="Helical" evidence="1">
    <location>
        <begin position="222"/>
        <end position="242"/>
    </location>
</feature>
<feature type="transmembrane region" description="Helical" evidence="1">
    <location>
        <begin position="259"/>
        <end position="279"/>
    </location>
</feature>
<feature type="transmembrane region" description="Helical" evidence="1">
    <location>
        <begin position="287"/>
        <end position="307"/>
    </location>
</feature>
<feature type="transmembrane region" description="Helical" evidence="1">
    <location>
        <begin position="311"/>
        <end position="331"/>
    </location>
</feature>
<feature type="transmembrane region" description="Helical" evidence="1">
    <location>
        <begin position="366"/>
        <end position="386"/>
    </location>
</feature>
<evidence type="ECO:0000255" key="1">
    <source>
        <dbReference type="HAMAP-Rule" id="MF_00038"/>
    </source>
</evidence>
<accession>Q13TY9</accession>
<proteinExistence type="inferred from homology"/>
<protein>
    <recommendedName>
        <fullName evidence="1">Phospho-N-acetylmuramoyl-pentapeptide-transferase</fullName>
        <ecNumber evidence="1">2.7.8.13</ecNumber>
    </recommendedName>
    <alternativeName>
        <fullName evidence="1">UDP-MurNAc-pentapeptide phosphotransferase</fullName>
    </alternativeName>
</protein>
<gene>
    <name evidence="1" type="primary">mraY</name>
    <name type="ordered locus">Bxeno_A3912</name>
    <name type="ORF">Bxe_A0483</name>
</gene>
<sequence length="389" mass="42745">MLLALAQWLQNDASFLRVFSYLTFRAVMATITALLIGLVCGPAVIRKLTAMKVGQAVRKDGPQTHLVKSGTPTMGGVLILLGIAVATLLWADLTNRFIWIVMLVTFGFGVIGWVDDYRKVVYKDPRGMSSREKYFWQSVIGLFAAVYLAFSVSEASNVRVYDLFMAWVRSGLSMGLPPHADLMLPFVKSISYPLGVWGFIVLTYLVIVGASNAVNLTDGLDGLVIMPVVLVGASLGVFAYVMGSSVYSKYLLFPHIAGAGELLIFCSAMGGAGLAFLWFNTHPAQMFMGDVGALALGGALGTVAVIVRQEIVLFIMGGIFVAETLSVMLQVTWFKFTKRRFGEGRRLFKMAPLHHHFELSGWKETQVVVRFWIITLMLCLFGLSTLKLR</sequence>
<comment type="function">
    <text evidence="1">Catalyzes the initial step of the lipid cycle reactions in the biosynthesis of the cell wall peptidoglycan: transfers peptidoglycan precursor phospho-MurNAc-pentapeptide from UDP-MurNAc-pentapeptide onto the lipid carrier undecaprenyl phosphate, yielding undecaprenyl-pyrophosphoryl-MurNAc-pentapeptide, known as lipid I.</text>
</comment>
<comment type="catalytic activity">
    <reaction evidence="1">
        <text>UDP-N-acetyl-alpha-D-muramoyl-L-alanyl-gamma-D-glutamyl-meso-2,6-diaminopimeloyl-D-alanyl-D-alanine + di-trans,octa-cis-undecaprenyl phosphate = di-trans,octa-cis-undecaprenyl diphospho-N-acetyl-alpha-D-muramoyl-L-alanyl-D-glutamyl-meso-2,6-diaminopimeloyl-D-alanyl-D-alanine + UMP</text>
        <dbReference type="Rhea" id="RHEA:28386"/>
        <dbReference type="ChEBI" id="CHEBI:57865"/>
        <dbReference type="ChEBI" id="CHEBI:60392"/>
        <dbReference type="ChEBI" id="CHEBI:61386"/>
        <dbReference type="ChEBI" id="CHEBI:61387"/>
        <dbReference type="EC" id="2.7.8.13"/>
    </reaction>
</comment>
<comment type="cofactor">
    <cofactor evidence="1">
        <name>Mg(2+)</name>
        <dbReference type="ChEBI" id="CHEBI:18420"/>
    </cofactor>
</comment>
<comment type="pathway">
    <text evidence="1">Cell wall biogenesis; peptidoglycan biosynthesis.</text>
</comment>
<comment type="subcellular location">
    <subcellularLocation>
        <location evidence="1">Cell inner membrane</location>
        <topology evidence="1">Multi-pass membrane protein</topology>
    </subcellularLocation>
</comment>
<comment type="similarity">
    <text evidence="1">Belongs to the glycosyltransferase 4 family. MraY subfamily.</text>
</comment>